<protein>
    <recommendedName>
        <fullName>Phosphatase and actin regulator 3</fullName>
    </recommendedName>
    <alternativeName>
        <fullName>Scaffold-associated PP1-inhibiting protein</fullName>
        <shortName>Scapinin</shortName>
    </alternativeName>
</protein>
<name>PHAR3_RAT</name>
<accession>Q6RFY2</accession>
<gene>
    <name type="primary">Phactr3</name>
</gene>
<sequence>MDQTPPARSEPLVSGIRTPPVRRNSKLATLGRIFKPWKWRKKKNEKLKQTTSALEKKMAGRQGREELIKQGLLEMMEQDSESKACSPKEGSQPAQSEPSAGEQETLTSEGVQPGSPSASGTDQASQDELLSSDAHPDDTAKMSSASSGEEADAGNLLPTTDEPSQEALSGSLDSPPRTLERSASQLPSPPLLPTPPPKASSKATKNVTGQAALFQGSSMKNNEPVLRGQLPTPTGSPHLTTVHRPLPPSRVIEELHRALATKHRQDSFQGRECRGSPKKRMDVRLSRTSSMERGKERDEAWSFDGASENKWTAAKDSEENKENLILSSELKDDLLLYQDEEALNDSIISGTLPRKCKKELLAVKLRNRPSKQELEDRNIFPRRTDEERQEIRQQIEMKLSKRLSQRPAVEELERRNILKQRNDQTEQEERREIKQRLTRKLNQRPTVDELRDRKILIRFSDYVEVARAQDYDRRADKPWTRLSAADKAAIRKELNEYKSNEMEVHASSKHLTRFHRP</sequence>
<dbReference type="EMBL" id="AY500157">
    <property type="protein sequence ID" value="AAS86431.1"/>
    <property type="molecule type" value="mRNA"/>
</dbReference>
<dbReference type="RefSeq" id="NP_999624.1">
    <property type="nucleotide sequence ID" value="NM_214459.4"/>
</dbReference>
<dbReference type="RefSeq" id="XP_038961481.1">
    <property type="nucleotide sequence ID" value="XM_039105553.2"/>
</dbReference>
<dbReference type="RefSeq" id="XP_063140303.1">
    <property type="nucleotide sequence ID" value="XM_063284233.1"/>
</dbReference>
<dbReference type="SMR" id="Q6RFY2"/>
<dbReference type="FunCoup" id="Q6RFY2">
    <property type="interactions" value="995"/>
</dbReference>
<dbReference type="STRING" id="10116.ENSRNOP00000071267"/>
<dbReference type="GlyGen" id="Q6RFY2">
    <property type="glycosylation" value="1 site"/>
</dbReference>
<dbReference type="iPTMnet" id="Q6RFY2"/>
<dbReference type="PhosphoSitePlus" id="Q6RFY2"/>
<dbReference type="PaxDb" id="10116-ENSRNOP00000009906"/>
<dbReference type="GeneID" id="362284"/>
<dbReference type="KEGG" id="rno:362284"/>
<dbReference type="AGR" id="RGD:1303029"/>
<dbReference type="CTD" id="116154"/>
<dbReference type="RGD" id="1303029">
    <property type="gene designation" value="Phactr3"/>
</dbReference>
<dbReference type="eggNOG" id="KOG4339">
    <property type="taxonomic scope" value="Eukaryota"/>
</dbReference>
<dbReference type="InParanoid" id="Q6RFY2"/>
<dbReference type="PhylomeDB" id="Q6RFY2"/>
<dbReference type="PRO" id="PR:Q6RFY2"/>
<dbReference type="Proteomes" id="UP000002494">
    <property type="component" value="Unplaced"/>
</dbReference>
<dbReference type="GO" id="GO:0016363">
    <property type="term" value="C:nuclear matrix"/>
    <property type="evidence" value="ECO:0007669"/>
    <property type="project" value="UniProtKB-SubCell"/>
</dbReference>
<dbReference type="GO" id="GO:0003779">
    <property type="term" value="F:actin binding"/>
    <property type="evidence" value="ECO:0000314"/>
    <property type="project" value="RGD"/>
</dbReference>
<dbReference type="GO" id="GO:0004864">
    <property type="term" value="F:protein phosphatase inhibitor activity"/>
    <property type="evidence" value="ECO:0000304"/>
    <property type="project" value="RGD"/>
</dbReference>
<dbReference type="GO" id="GO:0030036">
    <property type="term" value="P:actin cytoskeleton organization"/>
    <property type="evidence" value="ECO:0000318"/>
    <property type="project" value="GO_Central"/>
</dbReference>
<dbReference type="Gene3D" id="6.10.140.1750">
    <property type="match status" value="1"/>
</dbReference>
<dbReference type="Gene3D" id="6.10.140.2130">
    <property type="match status" value="1"/>
</dbReference>
<dbReference type="InterPro" id="IPR004018">
    <property type="entry name" value="RPEL_repeat"/>
</dbReference>
<dbReference type="PANTHER" id="PTHR12751:SF7">
    <property type="entry name" value="PHOSPHATASE AND ACTIN REGULATOR 3"/>
    <property type="match status" value="1"/>
</dbReference>
<dbReference type="PANTHER" id="PTHR12751">
    <property type="entry name" value="PHOSPHATASE AND ACTIN REGULATOR PHACTR"/>
    <property type="match status" value="1"/>
</dbReference>
<dbReference type="Pfam" id="PF02755">
    <property type="entry name" value="RPEL"/>
    <property type="match status" value="1"/>
</dbReference>
<dbReference type="SMART" id="SM00707">
    <property type="entry name" value="RPEL"/>
    <property type="match status" value="4"/>
</dbReference>
<dbReference type="PROSITE" id="PS51073">
    <property type="entry name" value="RPEL"/>
    <property type="match status" value="4"/>
</dbReference>
<keyword id="KW-0009">Actin-binding</keyword>
<keyword id="KW-0175">Coiled coil</keyword>
<keyword id="KW-0539">Nucleus</keyword>
<keyword id="KW-0597">Phosphoprotein</keyword>
<keyword id="KW-0650">Protein phosphatase inhibitor</keyword>
<keyword id="KW-1185">Reference proteome</keyword>
<keyword id="KW-0677">Repeat</keyword>
<reference key="1">
    <citation type="journal article" date="2004" name="Proc. Natl. Acad. Sci. U.S.A.">
        <title>Phactrs 1-4: a family of protein phosphatase 1 and actin regulatory proteins.</title>
        <authorList>
            <person name="Allen P.B."/>
            <person name="Greenfield A.T."/>
            <person name="Svenningsson P."/>
            <person name="Haspeslagh D.C."/>
            <person name="Greengard P."/>
        </authorList>
    </citation>
    <scope>NUCLEOTIDE SEQUENCE [MRNA]</scope>
    <scope>TISSUE SPECIFICITY</scope>
    <source>
        <strain>Sprague-Dawley</strain>
    </source>
</reference>
<reference key="2">
    <citation type="journal article" date="2012" name="Nat. Commun.">
        <title>Quantitative maps of protein phosphorylation sites across 14 different rat organs and tissues.</title>
        <authorList>
            <person name="Lundby A."/>
            <person name="Secher A."/>
            <person name="Lage K."/>
            <person name="Nordsborg N.B."/>
            <person name="Dmytriyev A."/>
            <person name="Lundby C."/>
            <person name="Olsen J.V."/>
        </authorList>
    </citation>
    <scope>PHOSPHORYLATION [LARGE SCALE ANALYSIS] AT SER-188</scope>
    <scope>IDENTIFICATION BY MASS SPECTROMETRY [LARGE SCALE ANALYSIS]</scope>
</reference>
<evidence type="ECO:0000250" key="1"/>
<evidence type="ECO:0000250" key="2">
    <source>
        <dbReference type="UniProtKB" id="Q8BYK5"/>
    </source>
</evidence>
<evidence type="ECO:0000250" key="3">
    <source>
        <dbReference type="UniProtKB" id="Q96KR7"/>
    </source>
</evidence>
<evidence type="ECO:0000255" key="4"/>
<evidence type="ECO:0000256" key="5">
    <source>
        <dbReference type="SAM" id="MobiDB-lite"/>
    </source>
</evidence>
<evidence type="ECO:0000269" key="6">
    <source>
    </source>
</evidence>
<evidence type="ECO:0000305" key="7"/>
<evidence type="ECO:0007744" key="8">
    <source>
    </source>
</evidence>
<proteinExistence type="evidence at protein level"/>
<feature type="chain" id="PRO_0000126640" description="Phosphatase and actin regulator 3">
    <location>
        <begin position="1"/>
        <end position="517"/>
    </location>
</feature>
<feature type="repeat" description="RPEL 1">
    <location>
        <begin position="52"/>
        <end position="77"/>
    </location>
</feature>
<feature type="repeat" description="RPEL 2">
    <location>
        <begin position="359"/>
        <end position="384"/>
    </location>
</feature>
<feature type="repeat" description="RPEL 3">
    <location>
        <begin position="397"/>
        <end position="422"/>
    </location>
</feature>
<feature type="repeat" description="RPEL 4">
    <location>
        <begin position="435"/>
        <end position="460"/>
    </location>
</feature>
<feature type="region of interest" description="Disordered" evidence="5">
    <location>
        <begin position="1"/>
        <end position="24"/>
    </location>
</feature>
<feature type="region of interest" description="Disordered" evidence="5">
    <location>
        <begin position="41"/>
        <end position="247"/>
    </location>
</feature>
<feature type="region of interest" description="Disordered" evidence="5">
    <location>
        <begin position="260"/>
        <end position="320"/>
    </location>
</feature>
<feature type="coiled-coil region" evidence="4">
    <location>
        <begin position="408"/>
        <end position="444"/>
    </location>
</feature>
<feature type="compositionally biased region" description="Basic and acidic residues" evidence="5">
    <location>
        <begin position="54"/>
        <end position="68"/>
    </location>
</feature>
<feature type="compositionally biased region" description="Polar residues" evidence="5">
    <location>
        <begin position="92"/>
        <end position="129"/>
    </location>
</feature>
<feature type="compositionally biased region" description="Polar residues" evidence="5">
    <location>
        <begin position="157"/>
        <end position="172"/>
    </location>
</feature>
<feature type="compositionally biased region" description="Pro residues" evidence="5">
    <location>
        <begin position="187"/>
        <end position="198"/>
    </location>
</feature>
<feature type="compositionally biased region" description="Basic and acidic residues" evidence="5">
    <location>
        <begin position="260"/>
        <end position="300"/>
    </location>
</feature>
<feature type="modified residue" description="Phosphothreonine" evidence="3">
    <location>
        <position position="29"/>
    </location>
</feature>
<feature type="modified residue" description="Phosphoserine" evidence="8">
    <location>
        <position position="188"/>
    </location>
</feature>
<feature type="modified residue" description="Phosphothreonine" evidence="2">
    <location>
        <position position="194"/>
    </location>
</feature>
<comment type="subunit">
    <text evidence="1">Binds actin and PPP1CA; thus inhibiting the protein phosphatase 1 (PP1) activity.</text>
</comment>
<comment type="subcellular location">
    <subcellularLocation>
        <location evidence="1">Nucleus matrix</location>
    </subcellularLocation>
    <text evidence="1">Localized to the nuclear matrix-intermediate filament scaffold.</text>
</comment>
<comment type="tissue specificity">
    <text evidence="6">Diffusely expressed throughout the brain cortex, with highest levels in the cortex and the hippocampus and lower levels in the striatum and thalamus.</text>
</comment>
<comment type="similarity">
    <text evidence="7">Belongs to the phosphatase and actin regulator family.</text>
</comment>
<organism>
    <name type="scientific">Rattus norvegicus</name>
    <name type="common">Rat</name>
    <dbReference type="NCBI Taxonomy" id="10116"/>
    <lineage>
        <taxon>Eukaryota</taxon>
        <taxon>Metazoa</taxon>
        <taxon>Chordata</taxon>
        <taxon>Craniata</taxon>
        <taxon>Vertebrata</taxon>
        <taxon>Euteleostomi</taxon>
        <taxon>Mammalia</taxon>
        <taxon>Eutheria</taxon>
        <taxon>Euarchontoglires</taxon>
        <taxon>Glires</taxon>
        <taxon>Rodentia</taxon>
        <taxon>Myomorpha</taxon>
        <taxon>Muroidea</taxon>
        <taxon>Muridae</taxon>
        <taxon>Murinae</taxon>
        <taxon>Rattus</taxon>
    </lineage>
</organism>